<accession>P9WFQ3</accession>
<accession>L0T878</accession>
<accession>P67106</accession>
<accession>P71690</accession>
<organism>
    <name type="scientific">Mycobacterium tuberculosis (strain ATCC 25618 / H37Rv)</name>
    <dbReference type="NCBI Taxonomy" id="83332"/>
    <lineage>
        <taxon>Bacteria</taxon>
        <taxon>Bacillati</taxon>
        <taxon>Actinomycetota</taxon>
        <taxon>Actinomycetes</taxon>
        <taxon>Mycobacteriales</taxon>
        <taxon>Mycobacteriaceae</taxon>
        <taxon>Mycobacterium</taxon>
        <taxon>Mycobacterium tuberculosis complex</taxon>
    </lineage>
</organism>
<comment type="function">
    <text evidence="1">Displays ATPase and GTPase activities.</text>
</comment>
<comment type="miscellaneous">
    <text>Was identified as a high-confidence drug target.</text>
</comment>
<comment type="similarity">
    <text evidence="1">Belongs to the RapZ-like family.</text>
</comment>
<protein>
    <recommendedName>
        <fullName evidence="1">Nucleotide-binding protein Rv1421</fullName>
    </recommendedName>
</protein>
<proteinExistence type="evidence at protein level"/>
<reference key="1">
    <citation type="journal article" date="1998" name="Nature">
        <title>Deciphering the biology of Mycobacterium tuberculosis from the complete genome sequence.</title>
        <authorList>
            <person name="Cole S.T."/>
            <person name="Brosch R."/>
            <person name="Parkhill J."/>
            <person name="Garnier T."/>
            <person name="Churcher C.M."/>
            <person name="Harris D.E."/>
            <person name="Gordon S.V."/>
            <person name="Eiglmeier K."/>
            <person name="Gas S."/>
            <person name="Barry C.E. III"/>
            <person name="Tekaia F."/>
            <person name="Badcock K."/>
            <person name="Basham D."/>
            <person name="Brown D."/>
            <person name="Chillingworth T."/>
            <person name="Connor R."/>
            <person name="Davies R.M."/>
            <person name="Devlin K."/>
            <person name="Feltwell T."/>
            <person name="Gentles S."/>
            <person name="Hamlin N."/>
            <person name="Holroyd S."/>
            <person name="Hornsby T."/>
            <person name="Jagels K."/>
            <person name="Krogh A."/>
            <person name="McLean J."/>
            <person name="Moule S."/>
            <person name="Murphy L.D."/>
            <person name="Oliver S."/>
            <person name="Osborne J."/>
            <person name="Quail M.A."/>
            <person name="Rajandream M.A."/>
            <person name="Rogers J."/>
            <person name="Rutter S."/>
            <person name="Seeger K."/>
            <person name="Skelton S."/>
            <person name="Squares S."/>
            <person name="Squares R."/>
            <person name="Sulston J.E."/>
            <person name="Taylor K."/>
            <person name="Whitehead S."/>
            <person name="Barrell B.G."/>
        </authorList>
    </citation>
    <scope>NUCLEOTIDE SEQUENCE [LARGE SCALE GENOMIC DNA]</scope>
    <source>
        <strain>ATCC 25618 / H37Rv</strain>
    </source>
</reference>
<reference key="2">
    <citation type="journal article" date="2008" name="BMC Syst. Biol.">
        <title>targetTB: a target identification pipeline for Mycobacterium tuberculosis through an interactome, reactome and genome-scale structural analysis.</title>
        <authorList>
            <person name="Raman K."/>
            <person name="Yeturu K."/>
            <person name="Chandra N."/>
        </authorList>
    </citation>
    <scope>IDENTIFICATION AS A DRUG TARGET [LARGE SCALE ANALYSIS]</scope>
</reference>
<reference key="3">
    <citation type="journal article" date="2011" name="Mol. Cell. Proteomics">
        <title>Proteogenomic analysis of Mycobacterium tuberculosis by high resolution mass spectrometry.</title>
        <authorList>
            <person name="Kelkar D.S."/>
            <person name="Kumar D."/>
            <person name="Kumar P."/>
            <person name="Balakrishnan L."/>
            <person name="Muthusamy B."/>
            <person name="Yadav A.K."/>
            <person name="Shrivastava P."/>
            <person name="Marimuthu A."/>
            <person name="Anand S."/>
            <person name="Sundaram H."/>
            <person name="Kingsbury R."/>
            <person name="Harsha H.C."/>
            <person name="Nair B."/>
            <person name="Prasad T.S."/>
            <person name="Chauhan D.S."/>
            <person name="Katoch K."/>
            <person name="Katoch V.M."/>
            <person name="Kumar P."/>
            <person name="Chaerkady R."/>
            <person name="Ramachandran S."/>
            <person name="Dash D."/>
            <person name="Pandey A."/>
        </authorList>
    </citation>
    <scope>IDENTIFICATION BY MASS SPECTROMETRY [LARGE SCALE ANALYSIS]</scope>
    <source>
        <strain>ATCC 25618 / H37Rv</strain>
    </source>
</reference>
<name>Y1421_MYCTU</name>
<feature type="chain" id="PRO_0000107732" description="Nucleotide-binding protein Rv1421">
    <location>
        <begin position="1"/>
        <end position="301"/>
    </location>
</feature>
<feature type="binding site" evidence="1">
    <location>
        <begin position="24"/>
        <end position="31"/>
    </location>
    <ligand>
        <name>ATP</name>
        <dbReference type="ChEBI" id="CHEBI:30616"/>
    </ligand>
</feature>
<feature type="binding site" evidence="1">
    <location>
        <begin position="75"/>
        <end position="78"/>
    </location>
    <ligand>
        <name>GTP</name>
        <dbReference type="ChEBI" id="CHEBI:37565"/>
    </ligand>
</feature>
<sequence>MMNHARGVENRSEGGGIDVVLVTGLSGAGRGTAAKVLEDLGWYVADNLPPQLITRMVDFGLAAGSRITQLAVVMDVRSRGFTGDLDSVRNELATRAITPRVVFMEASDDTLVRRYEQNRRSHPLQGEQTLAEGIAAERRMLAPVRATADLIIDTSTLSVGGLRDSIERAFGGDGGATTSVTVESFGFKYGLPMDADMVMDVRFLPNPHWVDELRPLTGQHPAVRDYVLHRPGAAEFLESYHRLLSLVVDGYRREGKRYMTIAIGCTGGKHRSVAIAEALMGLLRSDQQLSVRALHRDLGRE</sequence>
<dbReference type="EMBL" id="AL123456">
    <property type="protein sequence ID" value="CCP44180.1"/>
    <property type="molecule type" value="Genomic_DNA"/>
</dbReference>
<dbReference type="PIR" id="B70903">
    <property type="entry name" value="B70903"/>
</dbReference>
<dbReference type="RefSeq" id="NP_215937.1">
    <property type="nucleotide sequence ID" value="NC_000962.3"/>
</dbReference>
<dbReference type="SMR" id="P9WFQ3"/>
<dbReference type="FunCoup" id="P9WFQ3">
    <property type="interactions" value="22"/>
</dbReference>
<dbReference type="STRING" id="83332.Rv1421"/>
<dbReference type="PaxDb" id="83332-Rv1421"/>
<dbReference type="DNASU" id="886676"/>
<dbReference type="GeneID" id="886676"/>
<dbReference type="KEGG" id="mtu:Rv1421"/>
<dbReference type="KEGG" id="mtv:RVBD_1421"/>
<dbReference type="TubercuList" id="Rv1421"/>
<dbReference type="eggNOG" id="COG1660">
    <property type="taxonomic scope" value="Bacteria"/>
</dbReference>
<dbReference type="InParanoid" id="P9WFQ3"/>
<dbReference type="OrthoDB" id="9784461at2"/>
<dbReference type="PhylomeDB" id="P9WFQ3"/>
<dbReference type="Proteomes" id="UP000001584">
    <property type="component" value="Chromosome"/>
</dbReference>
<dbReference type="GO" id="GO:0005886">
    <property type="term" value="C:plasma membrane"/>
    <property type="evidence" value="ECO:0007005"/>
    <property type="project" value="MTBBASE"/>
</dbReference>
<dbReference type="GO" id="GO:0005524">
    <property type="term" value="F:ATP binding"/>
    <property type="evidence" value="ECO:0007669"/>
    <property type="project" value="UniProtKB-UniRule"/>
</dbReference>
<dbReference type="GO" id="GO:0005525">
    <property type="term" value="F:GTP binding"/>
    <property type="evidence" value="ECO:0007669"/>
    <property type="project" value="UniProtKB-UniRule"/>
</dbReference>
<dbReference type="GO" id="GO:0060090">
    <property type="term" value="F:molecular adaptor activity"/>
    <property type="evidence" value="ECO:0000318"/>
    <property type="project" value="GO_Central"/>
</dbReference>
<dbReference type="HAMAP" id="MF_00636">
    <property type="entry name" value="RapZ_like"/>
    <property type="match status" value="1"/>
</dbReference>
<dbReference type="InterPro" id="IPR027417">
    <property type="entry name" value="P-loop_NTPase"/>
</dbReference>
<dbReference type="InterPro" id="IPR005337">
    <property type="entry name" value="RapZ-like"/>
</dbReference>
<dbReference type="InterPro" id="IPR053930">
    <property type="entry name" value="RapZ-like_N"/>
</dbReference>
<dbReference type="InterPro" id="IPR053931">
    <property type="entry name" value="RapZ_C"/>
</dbReference>
<dbReference type="NCBIfam" id="NF003828">
    <property type="entry name" value="PRK05416.1"/>
    <property type="match status" value="1"/>
</dbReference>
<dbReference type="PANTHER" id="PTHR30448">
    <property type="entry name" value="RNASE ADAPTER PROTEIN RAPZ"/>
    <property type="match status" value="1"/>
</dbReference>
<dbReference type="PANTHER" id="PTHR30448:SF0">
    <property type="entry name" value="RNASE ADAPTER PROTEIN RAPZ"/>
    <property type="match status" value="1"/>
</dbReference>
<dbReference type="Pfam" id="PF22740">
    <property type="entry name" value="PapZ_C"/>
    <property type="match status" value="1"/>
</dbReference>
<dbReference type="Pfam" id="PF03668">
    <property type="entry name" value="RapZ-like_N"/>
    <property type="match status" value="1"/>
</dbReference>
<dbReference type="PIRSF" id="PIRSF005052">
    <property type="entry name" value="P-loopkin"/>
    <property type="match status" value="1"/>
</dbReference>
<dbReference type="SUPFAM" id="SSF52540">
    <property type="entry name" value="P-loop containing nucleoside triphosphate hydrolases"/>
    <property type="match status" value="1"/>
</dbReference>
<evidence type="ECO:0000255" key="1">
    <source>
        <dbReference type="HAMAP-Rule" id="MF_00636"/>
    </source>
</evidence>
<keyword id="KW-0067">ATP-binding</keyword>
<keyword id="KW-0342">GTP-binding</keyword>
<keyword id="KW-0547">Nucleotide-binding</keyword>
<keyword id="KW-1185">Reference proteome</keyword>
<gene>
    <name type="ordered locus">Rv1421</name>
    <name type="ORF">MTCY21B4.39</name>
</gene>